<gene>
    <name evidence="1" type="primary">ureB</name>
    <name type="ordered locus">PSHAa1758</name>
</gene>
<keyword id="KW-0963">Cytoplasm</keyword>
<keyword id="KW-0378">Hydrolase</keyword>
<keyword id="KW-1185">Reference proteome</keyword>
<name>URE2_PSET1</name>
<feature type="chain" id="PRO_0000234259" description="Urease subunit beta">
    <location>
        <begin position="1"/>
        <end position="110"/>
    </location>
</feature>
<organism>
    <name type="scientific">Pseudoalteromonas translucida (strain TAC 125)</name>
    <dbReference type="NCBI Taxonomy" id="326442"/>
    <lineage>
        <taxon>Bacteria</taxon>
        <taxon>Pseudomonadati</taxon>
        <taxon>Pseudomonadota</taxon>
        <taxon>Gammaproteobacteria</taxon>
        <taxon>Alteromonadales</taxon>
        <taxon>Pseudoalteromonadaceae</taxon>
        <taxon>Pseudoalteromonas</taxon>
    </lineage>
</organism>
<protein>
    <recommendedName>
        <fullName evidence="1">Urease subunit beta</fullName>
        <ecNumber evidence="1">3.5.1.5</ecNumber>
    </recommendedName>
    <alternativeName>
        <fullName evidence="1">Urea amidohydrolase subunit beta</fullName>
    </alternativeName>
</protein>
<comment type="catalytic activity">
    <reaction evidence="1">
        <text>urea + 2 H2O + H(+) = hydrogencarbonate + 2 NH4(+)</text>
        <dbReference type="Rhea" id="RHEA:20557"/>
        <dbReference type="ChEBI" id="CHEBI:15377"/>
        <dbReference type="ChEBI" id="CHEBI:15378"/>
        <dbReference type="ChEBI" id="CHEBI:16199"/>
        <dbReference type="ChEBI" id="CHEBI:17544"/>
        <dbReference type="ChEBI" id="CHEBI:28938"/>
        <dbReference type="EC" id="3.5.1.5"/>
    </reaction>
</comment>
<comment type="pathway">
    <text evidence="1">Nitrogen metabolism; urea degradation; CO(2) and NH(3) from urea (urease route): step 1/1.</text>
</comment>
<comment type="subunit">
    <text evidence="1">Heterotrimer of UreA (gamma), UreB (beta) and UreC (alpha) subunits. Three heterotrimers associate to form the active enzyme.</text>
</comment>
<comment type="subcellular location">
    <subcellularLocation>
        <location evidence="1">Cytoplasm</location>
    </subcellularLocation>
</comment>
<comment type="similarity">
    <text evidence="1">Belongs to the urease beta subunit family.</text>
</comment>
<proteinExistence type="inferred from homology"/>
<evidence type="ECO:0000255" key="1">
    <source>
        <dbReference type="HAMAP-Rule" id="MF_01954"/>
    </source>
</evidence>
<reference key="1">
    <citation type="journal article" date="2005" name="Genome Res.">
        <title>Coping with cold: the genome of the versatile marine Antarctica bacterium Pseudoalteromonas haloplanktis TAC125.</title>
        <authorList>
            <person name="Medigue C."/>
            <person name="Krin E."/>
            <person name="Pascal G."/>
            <person name="Barbe V."/>
            <person name="Bernsel A."/>
            <person name="Bertin P.N."/>
            <person name="Cheung F."/>
            <person name="Cruveiller S."/>
            <person name="D'Amico S."/>
            <person name="Duilio A."/>
            <person name="Fang G."/>
            <person name="Feller G."/>
            <person name="Ho C."/>
            <person name="Mangenot S."/>
            <person name="Marino G."/>
            <person name="Nilsson J."/>
            <person name="Parrilli E."/>
            <person name="Rocha E.P.C."/>
            <person name="Rouy Z."/>
            <person name="Sekowska A."/>
            <person name="Tutino M.L."/>
            <person name="Vallenet D."/>
            <person name="von Heijne G."/>
            <person name="Danchin A."/>
        </authorList>
    </citation>
    <scope>NUCLEOTIDE SEQUENCE [LARGE SCALE GENOMIC DNA]</scope>
    <source>
        <strain>TAC 125</strain>
    </source>
</reference>
<sequence length="110" mass="12199">MIPGEYQLKSGDIELCVGRKSITINVANKGDRPVQVGSHYHFAESNPALSFDREQAYGYRLAIAAGLAIRFEPGQTREVSLIPYSGLRRLYGFRGEVMGPLDNKPKQESV</sequence>
<dbReference type="EC" id="3.5.1.5" evidence="1"/>
<dbReference type="EMBL" id="CR954246">
    <property type="protein sequence ID" value="CAI86830.1"/>
    <property type="molecule type" value="Genomic_DNA"/>
</dbReference>
<dbReference type="SMR" id="Q3IH69"/>
<dbReference type="STRING" id="326442.PSHAa1758"/>
<dbReference type="KEGG" id="pha:PSHAa1758"/>
<dbReference type="eggNOG" id="COG0832">
    <property type="taxonomic scope" value="Bacteria"/>
</dbReference>
<dbReference type="HOGENOM" id="CLU_129707_1_1_6"/>
<dbReference type="BioCyc" id="PHAL326442:PSHA_RS08630-MONOMER"/>
<dbReference type="UniPathway" id="UPA00258">
    <property type="reaction ID" value="UER00370"/>
</dbReference>
<dbReference type="Proteomes" id="UP000006843">
    <property type="component" value="Chromosome I"/>
</dbReference>
<dbReference type="GO" id="GO:0035550">
    <property type="term" value="C:urease complex"/>
    <property type="evidence" value="ECO:0007669"/>
    <property type="project" value="InterPro"/>
</dbReference>
<dbReference type="GO" id="GO:0009039">
    <property type="term" value="F:urease activity"/>
    <property type="evidence" value="ECO:0007669"/>
    <property type="project" value="UniProtKB-UniRule"/>
</dbReference>
<dbReference type="GO" id="GO:0043419">
    <property type="term" value="P:urea catabolic process"/>
    <property type="evidence" value="ECO:0007669"/>
    <property type="project" value="UniProtKB-UniRule"/>
</dbReference>
<dbReference type="CDD" id="cd00407">
    <property type="entry name" value="Urease_beta"/>
    <property type="match status" value="1"/>
</dbReference>
<dbReference type="FunFam" id="2.10.150.10:FF:000001">
    <property type="entry name" value="Urease subunit beta"/>
    <property type="match status" value="1"/>
</dbReference>
<dbReference type="Gene3D" id="2.10.150.10">
    <property type="entry name" value="Urease, beta subunit"/>
    <property type="match status" value="1"/>
</dbReference>
<dbReference type="HAMAP" id="MF_01954">
    <property type="entry name" value="Urease_beta"/>
    <property type="match status" value="1"/>
</dbReference>
<dbReference type="InterPro" id="IPR002019">
    <property type="entry name" value="Urease_beta-like"/>
</dbReference>
<dbReference type="InterPro" id="IPR036461">
    <property type="entry name" value="Urease_betasu_sf"/>
</dbReference>
<dbReference type="InterPro" id="IPR050069">
    <property type="entry name" value="Urease_subunit"/>
</dbReference>
<dbReference type="NCBIfam" id="NF009682">
    <property type="entry name" value="PRK13203.1"/>
    <property type="match status" value="1"/>
</dbReference>
<dbReference type="NCBIfam" id="TIGR00192">
    <property type="entry name" value="urease_beta"/>
    <property type="match status" value="1"/>
</dbReference>
<dbReference type="PANTHER" id="PTHR33569">
    <property type="entry name" value="UREASE"/>
    <property type="match status" value="1"/>
</dbReference>
<dbReference type="PANTHER" id="PTHR33569:SF1">
    <property type="entry name" value="UREASE"/>
    <property type="match status" value="1"/>
</dbReference>
<dbReference type="Pfam" id="PF00699">
    <property type="entry name" value="Urease_beta"/>
    <property type="match status" value="1"/>
</dbReference>
<dbReference type="SUPFAM" id="SSF51278">
    <property type="entry name" value="Urease, beta-subunit"/>
    <property type="match status" value="1"/>
</dbReference>
<accession>Q3IH69</accession>